<proteinExistence type="inferred from homology"/>
<organism>
    <name type="scientific">Escherichia coli (strain SMS-3-5 / SECEC)</name>
    <dbReference type="NCBI Taxonomy" id="439855"/>
    <lineage>
        <taxon>Bacteria</taxon>
        <taxon>Pseudomonadati</taxon>
        <taxon>Pseudomonadota</taxon>
        <taxon>Gammaproteobacteria</taxon>
        <taxon>Enterobacterales</taxon>
        <taxon>Enterobacteriaceae</taxon>
        <taxon>Escherichia</taxon>
    </lineage>
</organism>
<keyword id="KW-1003">Cell membrane</keyword>
<keyword id="KW-0407">Ion channel</keyword>
<keyword id="KW-0406">Ion transport</keyword>
<keyword id="KW-0472">Membrane</keyword>
<keyword id="KW-0812">Transmembrane</keyword>
<keyword id="KW-1133">Transmembrane helix</keyword>
<keyword id="KW-0813">Transport</keyword>
<comment type="subcellular location">
    <subcellularLocation>
        <location evidence="1">Cell membrane</location>
        <topology evidence="1">Multi-pass membrane protein</topology>
    </subcellularLocation>
</comment>
<comment type="similarity">
    <text evidence="1">Belongs to the chloride channel (TC 2.A.49) family.</text>
</comment>
<dbReference type="EMBL" id="CP000970">
    <property type="protein sequence ID" value="ACB18528.1"/>
    <property type="molecule type" value="Genomic_DNA"/>
</dbReference>
<dbReference type="RefSeq" id="WP_000903114.1">
    <property type="nucleotide sequence ID" value="NC_010498.1"/>
</dbReference>
<dbReference type="SMR" id="B1LMI7"/>
<dbReference type="KEGG" id="ecm:EcSMS35_2541"/>
<dbReference type="HOGENOM" id="CLU_053130_0_0_6"/>
<dbReference type="Proteomes" id="UP000007011">
    <property type="component" value="Chromosome"/>
</dbReference>
<dbReference type="GO" id="GO:0005886">
    <property type="term" value="C:plasma membrane"/>
    <property type="evidence" value="ECO:0007669"/>
    <property type="project" value="UniProtKB-SubCell"/>
</dbReference>
<dbReference type="GO" id="GO:0015108">
    <property type="term" value="F:chloride transmembrane transporter activity"/>
    <property type="evidence" value="ECO:0007669"/>
    <property type="project" value="InterPro"/>
</dbReference>
<dbReference type="GO" id="GO:0005216">
    <property type="term" value="F:monoatomic ion channel activity"/>
    <property type="evidence" value="ECO:0007669"/>
    <property type="project" value="UniProtKB-UniRule"/>
</dbReference>
<dbReference type="CDD" id="cd00400">
    <property type="entry name" value="Voltage_gated_ClC"/>
    <property type="match status" value="1"/>
</dbReference>
<dbReference type="FunFam" id="1.10.3080.10:FF:000007">
    <property type="entry name" value="Putative ion-transport protein YfeO"/>
    <property type="match status" value="1"/>
</dbReference>
<dbReference type="Gene3D" id="1.10.3080.10">
    <property type="entry name" value="Clc chloride channel"/>
    <property type="match status" value="1"/>
</dbReference>
<dbReference type="HAMAP" id="MF_01115">
    <property type="entry name" value="CLC_YfeO"/>
    <property type="match status" value="1"/>
</dbReference>
<dbReference type="InterPro" id="IPR022969">
    <property type="entry name" value="Chloride_channel_YfeO"/>
</dbReference>
<dbReference type="InterPro" id="IPR014743">
    <property type="entry name" value="Cl-channel_core"/>
</dbReference>
<dbReference type="InterPro" id="IPR001807">
    <property type="entry name" value="ClC"/>
</dbReference>
<dbReference type="InterPro" id="IPR050368">
    <property type="entry name" value="ClC-type_chloride_channel"/>
</dbReference>
<dbReference type="NCBIfam" id="NF002971">
    <property type="entry name" value="PRK03655.1"/>
    <property type="match status" value="1"/>
</dbReference>
<dbReference type="PANTHER" id="PTHR43427">
    <property type="entry name" value="CHLORIDE CHANNEL PROTEIN CLC-E"/>
    <property type="match status" value="1"/>
</dbReference>
<dbReference type="PANTHER" id="PTHR43427:SF9">
    <property type="entry name" value="ION-TRANSPORT PROTEIN YFEO-RELATED"/>
    <property type="match status" value="1"/>
</dbReference>
<dbReference type="Pfam" id="PF00654">
    <property type="entry name" value="Voltage_CLC"/>
    <property type="match status" value="1"/>
</dbReference>
<dbReference type="PRINTS" id="PR00762">
    <property type="entry name" value="CLCHANNEL"/>
</dbReference>
<dbReference type="SUPFAM" id="SSF81340">
    <property type="entry name" value="Clc chloride channel"/>
    <property type="match status" value="1"/>
</dbReference>
<sequence length="418" mass="43635">MLHPRARTMLLLSLPAVAIGIASSLILIVVMKIASVLQNLLWLRLPGTLGIAQDSPFWIIAILTLTGIAVGLVIRFSQGHAGPDPACEPLIGAPVPPSALPGLIVALILGLAGGVSLGPEHPIMTVNIALAVAIGARLLPRVNRMEWTILASAGTIGALFGTPVAAALIFSQTLNGSSEVPLWDRLFAPLMAAAAGALTTGLFFHPHFSLPIAHYGQMEMTDILSGAIVAAIAIAAGMVAVWCLPRLHAMMHQIKNPVLMLGVGGFILGILGVIAGPVSLFKGLDEMQQMVANQAFSTSDYFLLAVIKLAALVVAAASGFRGGRIFPAVFVGVALGLMLHEHVPAVPAAITVSCAILGIVLVVTRDGWLSLFMAAVVVPNTTLLPLLCIVMLPAWLLLAGKPMMMVNRPKQQPPHDNV</sequence>
<evidence type="ECO:0000255" key="1">
    <source>
        <dbReference type="HAMAP-Rule" id="MF_01115"/>
    </source>
</evidence>
<gene>
    <name evidence="1" type="primary">yfeO</name>
    <name type="ordered locus">EcSMS35_2541</name>
</gene>
<feature type="chain" id="PRO_1000137214" description="Putative ion-transport protein YfeO">
    <location>
        <begin position="1"/>
        <end position="418"/>
    </location>
</feature>
<feature type="transmembrane region" description="Helical" evidence="1">
    <location>
        <begin position="10"/>
        <end position="30"/>
    </location>
</feature>
<feature type="transmembrane region" description="Helical" evidence="1">
    <location>
        <begin position="54"/>
        <end position="74"/>
    </location>
</feature>
<feature type="transmembrane region" description="Helical" evidence="1">
    <location>
        <begin position="99"/>
        <end position="119"/>
    </location>
</feature>
<feature type="transmembrane region" description="Helical" evidence="1">
    <location>
        <begin position="120"/>
        <end position="140"/>
    </location>
</feature>
<feature type="transmembrane region" description="Helical" evidence="1">
    <location>
        <begin position="149"/>
        <end position="169"/>
    </location>
</feature>
<feature type="transmembrane region" description="Helical" evidence="1">
    <location>
        <begin position="186"/>
        <end position="206"/>
    </location>
</feature>
<feature type="transmembrane region" description="Helical" evidence="1">
    <location>
        <begin position="223"/>
        <end position="243"/>
    </location>
</feature>
<feature type="transmembrane region" description="Helical" evidence="1">
    <location>
        <begin position="258"/>
        <end position="278"/>
    </location>
</feature>
<feature type="transmembrane region" description="Helical" evidence="1">
    <location>
        <begin position="300"/>
        <end position="320"/>
    </location>
</feature>
<feature type="transmembrane region" description="Helical" evidence="1">
    <location>
        <begin position="322"/>
        <end position="342"/>
    </location>
</feature>
<feature type="transmembrane region" description="Helical" evidence="1">
    <location>
        <begin position="343"/>
        <end position="363"/>
    </location>
</feature>
<feature type="transmembrane region" description="Helical" evidence="1">
    <location>
        <begin position="371"/>
        <end position="391"/>
    </location>
</feature>
<protein>
    <recommendedName>
        <fullName evidence="1">Putative ion-transport protein YfeO</fullName>
    </recommendedName>
</protein>
<reference key="1">
    <citation type="journal article" date="2008" name="J. Bacteriol.">
        <title>Insights into the environmental resistance gene pool from the genome sequence of the multidrug-resistant environmental isolate Escherichia coli SMS-3-5.</title>
        <authorList>
            <person name="Fricke W.F."/>
            <person name="Wright M.S."/>
            <person name="Lindell A.H."/>
            <person name="Harkins D.M."/>
            <person name="Baker-Austin C."/>
            <person name="Ravel J."/>
            <person name="Stepanauskas R."/>
        </authorList>
    </citation>
    <scope>NUCLEOTIDE SEQUENCE [LARGE SCALE GENOMIC DNA]</scope>
    <source>
        <strain>SMS-3-5 / SECEC</strain>
    </source>
</reference>
<name>YFEO_ECOSM</name>
<accession>B1LMI7</accession>